<feature type="chain" id="PRO_0000359164" description="Acetyl-coenzyme A carboxylase carboxyl transferase subunit beta, chloroplastic">
    <location>
        <begin position="1"/>
        <end position="498"/>
    </location>
</feature>
<feature type="domain" description="CoA carboxyltransferase N-terminal" evidence="3">
    <location>
        <begin position="228"/>
        <end position="498"/>
    </location>
</feature>
<feature type="zinc finger region" description="C4-type" evidence="2">
    <location>
        <begin position="232"/>
        <end position="254"/>
    </location>
</feature>
<feature type="binding site" evidence="2">
    <location>
        <position position="232"/>
    </location>
    <ligand>
        <name>Zn(2+)</name>
        <dbReference type="ChEBI" id="CHEBI:29105"/>
    </ligand>
</feature>
<feature type="binding site" evidence="2">
    <location>
        <position position="235"/>
    </location>
    <ligand>
        <name>Zn(2+)</name>
        <dbReference type="ChEBI" id="CHEBI:29105"/>
    </ligand>
</feature>
<feature type="binding site" evidence="2">
    <location>
        <position position="251"/>
    </location>
    <ligand>
        <name>Zn(2+)</name>
        <dbReference type="ChEBI" id="CHEBI:29105"/>
    </ligand>
</feature>
<feature type="binding site" evidence="2">
    <location>
        <position position="254"/>
    </location>
    <ligand>
        <name>Zn(2+)</name>
        <dbReference type="ChEBI" id="CHEBI:29105"/>
    </ligand>
</feature>
<evidence type="ECO:0000250" key="1"/>
<evidence type="ECO:0000255" key="2">
    <source>
        <dbReference type="HAMAP-Rule" id="MF_01395"/>
    </source>
</evidence>
<evidence type="ECO:0000255" key="3">
    <source>
        <dbReference type="PROSITE-ProRule" id="PRU01136"/>
    </source>
</evidence>
<dbReference type="EC" id="2.1.3.15" evidence="2"/>
<dbReference type="EMBL" id="EF489041">
    <property type="protein sequence ID" value="ABO36714.1"/>
    <property type="molecule type" value="Genomic_DNA"/>
</dbReference>
<dbReference type="RefSeq" id="YP_001109511.1">
    <property type="nucleotide sequence ID" value="NC_009143.1"/>
</dbReference>
<dbReference type="SMR" id="A4GYS0"/>
<dbReference type="FunCoup" id="A4GYS0">
    <property type="interactions" value="393"/>
</dbReference>
<dbReference type="STRING" id="3694.A4GYS0"/>
<dbReference type="EnsemblPlants" id="Potri.013G162600.1.v4.1">
    <property type="protein sequence ID" value="Potri.013G162600.1.v4.1"/>
    <property type="gene ID" value="Potri.013G162600.v4.1"/>
</dbReference>
<dbReference type="GeneID" id="4929679"/>
<dbReference type="Gramene" id="Potri.013G162600.1.v4.1">
    <property type="protein sequence ID" value="Potri.013G162600.1.v4.1"/>
    <property type="gene ID" value="Potri.013G162600.v4.1"/>
</dbReference>
<dbReference type="KEGG" id="pop:4929679"/>
<dbReference type="InParanoid" id="A4GYS0"/>
<dbReference type="OMA" id="KYSWNNH"/>
<dbReference type="OrthoDB" id="838593at2759"/>
<dbReference type="UniPathway" id="UPA00655">
    <property type="reaction ID" value="UER00711"/>
</dbReference>
<dbReference type="Proteomes" id="UP000006729">
    <property type="component" value="Chloroplast"/>
</dbReference>
<dbReference type="ExpressionAtlas" id="A4GYS0">
    <property type="expression patterns" value="baseline"/>
</dbReference>
<dbReference type="GO" id="GO:0009317">
    <property type="term" value="C:acetyl-CoA carboxylase complex"/>
    <property type="evidence" value="ECO:0007669"/>
    <property type="project" value="InterPro"/>
</dbReference>
<dbReference type="GO" id="GO:0009570">
    <property type="term" value="C:chloroplast stroma"/>
    <property type="evidence" value="ECO:0007669"/>
    <property type="project" value="UniProtKB-SubCell"/>
</dbReference>
<dbReference type="GO" id="GO:0003989">
    <property type="term" value="F:acetyl-CoA carboxylase activity"/>
    <property type="evidence" value="ECO:0007669"/>
    <property type="project" value="InterPro"/>
</dbReference>
<dbReference type="GO" id="GO:0005524">
    <property type="term" value="F:ATP binding"/>
    <property type="evidence" value="ECO:0007669"/>
    <property type="project" value="UniProtKB-KW"/>
</dbReference>
<dbReference type="GO" id="GO:0016743">
    <property type="term" value="F:carboxyl- or carbamoyltransferase activity"/>
    <property type="evidence" value="ECO:0007669"/>
    <property type="project" value="UniProtKB-UniRule"/>
</dbReference>
<dbReference type="GO" id="GO:0008270">
    <property type="term" value="F:zinc ion binding"/>
    <property type="evidence" value="ECO:0007669"/>
    <property type="project" value="UniProtKB-UniRule"/>
</dbReference>
<dbReference type="GO" id="GO:0006633">
    <property type="term" value="P:fatty acid biosynthetic process"/>
    <property type="evidence" value="ECO:0000318"/>
    <property type="project" value="GO_Central"/>
</dbReference>
<dbReference type="GO" id="GO:2001295">
    <property type="term" value="P:malonyl-CoA biosynthetic process"/>
    <property type="evidence" value="ECO:0007669"/>
    <property type="project" value="UniProtKB-UniRule"/>
</dbReference>
<dbReference type="Gene3D" id="3.90.226.10">
    <property type="entry name" value="2-enoyl-CoA Hydratase, Chain A, domain 1"/>
    <property type="match status" value="1"/>
</dbReference>
<dbReference type="HAMAP" id="MF_01395">
    <property type="entry name" value="AcetylCoA_CT_beta"/>
    <property type="match status" value="1"/>
</dbReference>
<dbReference type="InterPro" id="IPR034733">
    <property type="entry name" value="AcCoA_carboxyl_beta"/>
</dbReference>
<dbReference type="InterPro" id="IPR000438">
    <property type="entry name" value="Acetyl_CoA_COase_Trfase_b_su"/>
</dbReference>
<dbReference type="InterPro" id="IPR029045">
    <property type="entry name" value="ClpP/crotonase-like_dom_sf"/>
</dbReference>
<dbReference type="InterPro" id="IPR011762">
    <property type="entry name" value="COA_CT_N"/>
</dbReference>
<dbReference type="NCBIfam" id="TIGR00515">
    <property type="entry name" value="accD"/>
    <property type="match status" value="1"/>
</dbReference>
<dbReference type="PANTHER" id="PTHR42995">
    <property type="entry name" value="ACETYL-COENZYME A CARBOXYLASE CARBOXYL TRANSFERASE SUBUNIT BETA, CHLOROPLASTIC"/>
    <property type="match status" value="1"/>
</dbReference>
<dbReference type="PANTHER" id="PTHR42995:SF5">
    <property type="entry name" value="ACETYL-COENZYME A CARBOXYLASE CARBOXYL TRANSFERASE SUBUNIT BETA, CHLOROPLASTIC"/>
    <property type="match status" value="1"/>
</dbReference>
<dbReference type="Pfam" id="PF01039">
    <property type="entry name" value="Carboxyl_trans"/>
    <property type="match status" value="1"/>
</dbReference>
<dbReference type="PRINTS" id="PR01070">
    <property type="entry name" value="ACCCTRFRASEB"/>
</dbReference>
<dbReference type="SUPFAM" id="SSF52096">
    <property type="entry name" value="ClpP/crotonase"/>
    <property type="match status" value="1"/>
</dbReference>
<dbReference type="PROSITE" id="PS50980">
    <property type="entry name" value="COA_CT_NTER"/>
    <property type="match status" value="1"/>
</dbReference>
<protein>
    <recommendedName>
        <fullName evidence="2">Acetyl-coenzyme A carboxylase carboxyl transferase subunit beta, chloroplastic</fullName>
        <shortName evidence="2">ACCase subunit beta</shortName>
        <shortName evidence="2">Acetyl-CoA carboxylase carboxyltransferase subunit beta</shortName>
        <ecNumber evidence="2">2.1.3.15</ecNumber>
    </recommendedName>
</protein>
<name>ACCD_POPTR</name>
<gene>
    <name evidence="2" type="primary">accD</name>
    <name type="ordered locus">Poptr_cp032</name>
</gene>
<proteinExistence type="inferred from homology"/>
<organism>
    <name type="scientific">Populus trichocarpa</name>
    <name type="common">Western balsam poplar</name>
    <name type="synonym">Populus balsamifera subsp. trichocarpa</name>
    <dbReference type="NCBI Taxonomy" id="3694"/>
    <lineage>
        <taxon>Eukaryota</taxon>
        <taxon>Viridiplantae</taxon>
        <taxon>Streptophyta</taxon>
        <taxon>Embryophyta</taxon>
        <taxon>Tracheophyta</taxon>
        <taxon>Spermatophyta</taxon>
        <taxon>Magnoliopsida</taxon>
        <taxon>eudicotyledons</taxon>
        <taxon>Gunneridae</taxon>
        <taxon>Pentapetalae</taxon>
        <taxon>rosids</taxon>
        <taxon>fabids</taxon>
        <taxon>Malpighiales</taxon>
        <taxon>Salicaceae</taxon>
        <taxon>Saliceae</taxon>
        <taxon>Populus</taxon>
    </lineage>
</organism>
<geneLocation type="chloroplast"/>
<sequence length="498" mass="56211">MKKCWFHSMLSNVELEYRCRLSKSMDNLGPLENTSVSEDPILNDTEKNTYNWSHSDSSNVDHLVGVRDIRNLNVDDTFLVLGRDNKKDGYSIYFDIENQVFGIDNNHSFLSKLEKEFSSYWNSSYLNKGSRSDDSHYDYSMYDNKYSWNNYINSCIDSYLRSQIGIASSILSGSESYSESYISTYILGESRNSSETGNSRLRTSTNGSDFALRENSNDLGVTQKYKHLWVQCEICYGLNYKKFFKSKMNICEQCGYHLKMSSSDRIELSIDPGTWDPMDEEMFSLDPIDFHSEEEPYKDRIDSYQKKTGLTEAIQTGIGQLNGIPVAIGVMDFQFMGGSMGSVVGEKITRLIEYATNQFLPLILVCASGGARMQEGSLSLMQMAKISSALYDYQSNKKLVYVSILTSPTTGGVTASFGMLGDIIIAEPNAYIAFAGKRVIEQTLNKTVPEGSQAAEFLFHKGLFDPIVPRNLLKGVLSELFQLHAFFPLNHNLSRTLT</sequence>
<keyword id="KW-0067">ATP-binding</keyword>
<keyword id="KW-0150">Chloroplast</keyword>
<keyword id="KW-0275">Fatty acid biosynthesis</keyword>
<keyword id="KW-0276">Fatty acid metabolism</keyword>
<keyword id="KW-0444">Lipid biosynthesis</keyword>
<keyword id="KW-0443">Lipid metabolism</keyword>
<keyword id="KW-0479">Metal-binding</keyword>
<keyword id="KW-0547">Nucleotide-binding</keyword>
<keyword id="KW-0934">Plastid</keyword>
<keyword id="KW-1185">Reference proteome</keyword>
<keyword id="KW-0808">Transferase</keyword>
<keyword id="KW-0862">Zinc</keyword>
<keyword id="KW-0863">Zinc-finger</keyword>
<reference key="1">
    <citation type="journal article" date="2006" name="Science">
        <title>The genome of black cottonwood, Populus trichocarpa (Torr. &amp; Gray).</title>
        <authorList>
            <person name="Tuskan G.A."/>
            <person name="Difazio S."/>
            <person name="Jansson S."/>
            <person name="Bohlmann J."/>
            <person name="Grigoriev I."/>
            <person name="Hellsten U."/>
            <person name="Putnam N."/>
            <person name="Ralph S."/>
            <person name="Rombauts S."/>
            <person name="Salamov A."/>
            <person name="Schein J."/>
            <person name="Sterck L."/>
            <person name="Aerts A."/>
            <person name="Bhalerao R.R."/>
            <person name="Bhalerao R.P."/>
            <person name="Blaudez D."/>
            <person name="Boerjan W."/>
            <person name="Brun A."/>
            <person name="Brunner A."/>
            <person name="Busov V."/>
            <person name="Campbell M."/>
            <person name="Carlson J."/>
            <person name="Chalot M."/>
            <person name="Chapman J."/>
            <person name="Chen G.-L."/>
            <person name="Cooper D."/>
            <person name="Coutinho P.M."/>
            <person name="Couturier J."/>
            <person name="Covert S."/>
            <person name="Cronk Q."/>
            <person name="Cunningham R."/>
            <person name="Davis J."/>
            <person name="Degroeve S."/>
            <person name="Dejardin A."/>
            <person name="dePamphilis C.W."/>
            <person name="Detter J."/>
            <person name="Dirks B."/>
            <person name="Dubchak I."/>
            <person name="Duplessis S."/>
            <person name="Ehlting J."/>
            <person name="Ellis B."/>
            <person name="Gendler K."/>
            <person name="Goodstein D."/>
            <person name="Gribskov M."/>
            <person name="Grimwood J."/>
            <person name="Groover A."/>
            <person name="Gunter L."/>
            <person name="Hamberger B."/>
            <person name="Heinze B."/>
            <person name="Helariutta Y."/>
            <person name="Henrissat B."/>
            <person name="Holligan D."/>
            <person name="Holt R."/>
            <person name="Huang W."/>
            <person name="Islam-Faridi N."/>
            <person name="Jones S."/>
            <person name="Jones-Rhoades M."/>
            <person name="Jorgensen R."/>
            <person name="Joshi C."/>
            <person name="Kangasjaervi J."/>
            <person name="Karlsson J."/>
            <person name="Kelleher C."/>
            <person name="Kirkpatrick R."/>
            <person name="Kirst M."/>
            <person name="Kohler A."/>
            <person name="Kalluri U."/>
            <person name="Larimer F."/>
            <person name="Leebens-Mack J."/>
            <person name="Leple J.-C."/>
            <person name="Locascio P."/>
            <person name="Lou Y."/>
            <person name="Lucas S."/>
            <person name="Martin F."/>
            <person name="Montanini B."/>
            <person name="Napoli C."/>
            <person name="Nelson D.R."/>
            <person name="Nelson C."/>
            <person name="Nieminen K."/>
            <person name="Nilsson O."/>
            <person name="Pereda V."/>
            <person name="Peter G."/>
            <person name="Philippe R."/>
            <person name="Pilate G."/>
            <person name="Poliakov A."/>
            <person name="Razumovskaya J."/>
            <person name="Richardson P."/>
            <person name="Rinaldi C."/>
            <person name="Ritland K."/>
            <person name="Rouze P."/>
            <person name="Ryaboy D."/>
            <person name="Schmutz J."/>
            <person name="Schrader J."/>
            <person name="Segerman B."/>
            <person name="Shin H."/>
            <person name="Siddiqui A."/>
            <person name="Sterky F."/>
            <person name="Terry A."/>
            <person name="Tsai C.-J."/>
            <person name="Uberbacher E."/>
            <person name="Unneberg P."/>
            <person name="Vahala J."/>
            <person name="Wall K."/>
            <person name="Wessler S."/>
            <person name="Yang G."/>
            <person name="Yin T."/>
            <person name="Douglas C."/>
            <person name="Marra M."/>
            <person name="Sandberg G."/>
            <person name="Van de Peer Y."/>
            <person name="Rokhsar D.S."/>
        </authorList>
    </citation>
    <scope>NUCLEOTIDE SEQUENCE [LARGE SCALE GENOMIC DNA]</scope>
    <source>
        <strain>cv. Nisqually</strain>
    </source>
</reference>
<comment type="function">
    <text evidence="2">Component of the acetyl coenzyme A carboxylase (ACC) complex. Biotin carboxylase (BC) catalyzes the carboxylation of biotin on its carrier protein (BCCP) and then the CO(2) group is transferred by the transcarboxylase to acetyl-CoA to form malonyl-CoA.</text>
</comment>
<comment type="catalytic activity">
    <reaction evidence="2">
        <text>N(6)-carboxybiotinyl-L-lysyl-[protein] + acetyl-CoA = N(6)-biotinyl-L-lysyl-[protein] + malonyl-CoA</text>
        <dbReference type="Rhea" id="RHEA:54728"/>
        <dbReference type="Rhea" id="RHEA-COMP:10505"/>
        <dbReference type="Rhea" id="RHEA-COMP:10506"/>
        <dbReference type="ChEBI" id="CHEBI:57288"/>
        <dbReference type="ChEBI" id="CHEBI:57384"/>
        <dbReference type="ChEBI" id="CHEBI:83144"/>
        <dbReference type="ChEBI" id="CHEBI:83145"/>
        <dbReference type="EC" id="2.1.3.15"/>
    </reaction>
</comment>
<comment type="cofactor">
    <cofactor evidence="2">
        <name>Zn(2+)</name>
        <dbReference type="ChEBI" id="CHEBI:29105"/>
    </cofactor>
    <text evidence="2">Binds 1 zinc ion per subunit.</text>
</comment>
<comment type="pathway">
    <text evidence="2">Lipid metabolism; malonyl-CoA biosynthesis; malonyl-CoA from acetyl-CoA: step 1/1.</text>
</comment>
<comment type="subunit">
    <text evidence="1">Acetyl-CoA carboxylase is a heterohexamer composed of biotin carboxyl carrier protein, biotin carboxylase and 2 subunits each of ACCase subunit alpha and ACCase plastid-coded subunit beta (accD).</text>
</comment>
<comment type="subcellular location">
    <subcellularLocation>
        <location evidence="2">Plastid</location>
        <location evidence="2">Chloroplast stroma</location>
    </subcellularLocation>
</comment>
<comment type="similarity">
    <text evidence="2">Belongs to the AccD/PCCB family.</text>
</comment>
<accession>A4GYS0</accession>